<evidence type="ECO:0000255" key="1">
    <source>
        <dbReference type="HAMAP-Rule" id="MF_00651"/>
    </source>
</evidence>
<comment type="function">
    <text evidence="1">Could be a nuclease involved in processing of the 5'-end of pre-16S rRNA.</text>
</comment>
<comment type="subcellular location">
    <subcellularLocation>
        <location evidence="1">Cytoplasm</location>
    </subcellularLocation>
</comment>
<comment type="similarity">
    <text evidence="1">Belongs to the YqgF nuclease family.</text>
</comment>
<name>YQGF_PARMW</name>
<reference key="1">
    <citation type="journal article" date="2003" name="Nature">
        <title>The genome of a motile marine Synechococcus.</title>
        <authorList>
            <person name="Palenik B."/>
            <person name="Brahamsha B."/>
            <person name="Larimer F.W."/>
            <person name="Land M.L."/>
            <person name="Hauser L."/>
            <person name="Chain P."/>
            <person name="Lamerdin J.E."/>
            <person name="Regala W."/>
            <person name="Allen E.E."/>
            <person name="McCarren J."/>
            <person name="Paulsen I.T."/>
            <person name="Dufresne A."/>
            <person name="Partensky F."/>
            <person name="Webb E.A."/>
            <person name="Waterbury J."/>
        </authorList>
    </citation>
    <scope>NUCLEOTIDE SEQUENCE [LARGE SCALE GENOMIC DNA]</scope>
    <source>
        <strain>WH8102</strain>
    </source>
</reference>
<organism>
    <name type="scientific">Parasynechococcus marenigrum (strain WH8102)</name>
    <dbReference type="NCBI Taxonomy" id="84588"/>
    <lineage>
        <taxon>Bacteria</taxon>
        <taxon>Bacillati</taxon>
        <taxon>Cyanobacteriota</taxon>
        <taxon>Cyanophyceae</taxon>
        <taxon>Synechococcales</taxon>
        <taxon>Prochlorococcaceae</taxon>
        <taxon>Parasynechococcus</taxon>
        <taxon>Parasynechococcus marenigrum</taxon>
    </lineage>
</organism>
<gene>
    <name type="ordered locus">SYNW0779</name>
</gene>
<accession>Q7U845</accession>
<protein>
    <recommendedName>
        <fullName evidence="1">Putative pre-16S rRNA nuclease</fullName>
        <ecNumber evidence="1">3.1.-.-</ecNumber>
    </recommendedName>
</protein>
<feature type="chain" id="PRO_0000172160" description="Putative pre-16S rRNA nuclease">
    <location>
        <begin position="1"/>
        <end position="157"/>
    </location>
</feature>
<dbReference type="EC" id="3.1.-.-" evidence="1"/>
<dbReference type="EMBL" id="BX569691">
    <property type="protein sequence ID" value="CAE07294.1"/>
    <property type="molecule type" value="Genomic_DNA"/>
</dbReference>
<dbReference type="RefSeq" id="WP_011127644.1">
    <property type="nucleotide sequence ID" value="NC_005070.1"/>
</dbReference>
<dbReference type="SMR" id="Q7U845"/>
<dbReference type="STRING" id="84588.SYNW0779"/>
<dbReference type="KEGG" id="syw:SYNW0779"/>
<dbReference type="eggNOG" id="COG0816">
    <property type="taxonomic scope" value="Bacteria"/>
</dbReference>
<dbReference type="HOGENOM" id="CLU_098240_3_1_3"/>
<dbReference type="Proteomes" id="UP000001422">
    <property type="component" value="Chromosome"/>
</dbReference>
<dbReference type="GO" id="GO:0005829">
    <property type="term" value="C:cytosol"/>
    <property type="evidence" value="ECO:0007669"/>
    <property type="project" value="TreeGrafter"/>
</dbReference>
<dbReference type="GO" id="GO:0004518">
    <property type="term" value="F:nuclease activity"/>
    <property type="evidence" value="ECO:0007669"/>
    <property type="project" value="UniProtKB-KW"/>
</dbReference>
<dbReference type="GO" id="GO:0000967">
    <property type="term" value="P:rRNA 5'-end processing"/>
    <property type="evidence" value="ECO:0007669"/>
    <property type="project" value="UniProtKB-UniRule"/>
</dbReference>
<dbReference type="CDD" id="cd16964">
    <property type="entry name" value="YqgF"/>
    <property type="match status" value="1"/>
</dbReference>
<dbReference type="Gene3D" id="3.30.420.140">
    <property type="entry name" value="YqgF/RNase H-like domain"/>
    <property type="match status" value="1"/>
</dbReference>
<dbReference type="HAMAP" id="MF_00651">
    <property type="entry name" value="Nuclease_YqgF"/>
    <property type="match status" value="1"/>
</dbReference>
<dbReference type="InterPro" id="IPR012337">
    <property type="entry name" value="RNaseH-like_sf"/>
</dbReference>
<dbReference type="InterPro" id="IPR005227">
    <property type="entry name" value="YqgF"/>
</dbReference>
<dbReference type="InterPro" id="IPR006641">
    <property type="entry name" value="YqgF/RNaseH-like_dom"/>
</dbReference>
<dbReference type="InterPro" id="IPR037027">
    <property type="entry name" value="YqgF/RNaseH-like_dom_sf"/>
</dbReference>
<dbReference type="NCBIfam" id="TIGR00250">
    <property type="entry name" value="RNAse_H_YqgF"/>
    <property type="match status" value="1"/>
</dbReference>
<dbReference type="PANTHER" id="PTHR33317">
    <property type="entry name" value="POLYNUCLEOTIDYL TRANSFERASE, RIBONUCLEASE H-LIKE SUPERFAMILY PROTEIN"/>
    <property type="match status" value="1"/>
</dbReference>
<dbReference type="PANTHER" id="PTHR33317:SF4">
    <property type="entry name" value="POLYNUCLEOTIDYL TRANSFERASE, RIBONUCLEASE H-LIKE SUPERFAMILY PROTEIN"/>
    <property type="match status" value="1"/>
</dbReference>
<dbReference type="Pfam" id="PF03652">
    <property type="entry name" value="RuvX"/>
    <property type="match status" value="1"/>
</dbReference>
<dbReference type="SMART" id="SM00732">
    <property type="entry name" value="YqgFc"/>
    <property type="match status" value="1"/>
</dbReference>
<dbReference type="SUPFAM" id="SSF53098">
    <property type="entry name" value="Ribonuclease H-like"/>
    <property type="match status" value="1"/>
</dbReference>
<keyword id="KW-0963">Cytoplasm</keyword>
<keyword id="KW-0378">Hydrolase</keyword>
<keyword id="KW-0540">Nuclease</keyword>
<keyword id="KW-0690">Ribosome biogenesis</keyword>
<proteinExistence type="inferred from homology"/>
<sequence>MPRPCSVLSLDVGRKRIGLAGCDPLGITVTPIKALHRGRFDDDLPVLQQLCQDRRVQGLVVGLPLDAAGQPTAQADHCLRYGRRLAQALQLPLAWVNEHSSTWAAGERHGLKGDRSGRLDSAAAALLLDQWLREGPDLKPVQGLLGGAGAELVDGGS</sequence>